<accession>Q04B29</accession>
<reference key="1">
    <citation type="journal article" date="2006" name="Proc. Natl. Acad. Sci. U.S.A.">
        <title>Comparative genomics of the lactic acid bacteria.</title>
        <authorList>
            <person name="Makarova K.S."/>
            <person name="Slesarev A."/>
            <person name="Wolf Y.I."/>
            <person name="Sorokin A."/>
            <person name="Mirkin B."/>
            <person name="Koonin E.V."/>
            <person name="Pavlov A."/>
            <person name="Pavlova N."/>
            <person name="Karamychev V."/>
            <person name="Polouchine N."/>
            <person name="Shakhova V."/>
            <person name="Grigoriev I."/>
            <person name="Lou Y."/>
            <person name="Rohksar D."/>
            <person name="Lucas S."/>
            <person name="Huang K."/>
            <person name="Goodstein D.M."/>
            <person name="Hawkins T."/>
            <person name="Plengvidhya V."/>
            <person name="Welker D."/>
            <person name="Hughes J."/>
            <person name="Goh Y."/>
            <person name="Benson A."/>
            <person name="Baldwin K."/>
            <person name="Lee J.-H."/>
            <person name="Diaz-Muniz I."/>
            <person name="Dosti B."/>
            <person name="Smeianov V."/>
            <person name="Wechter W."/>
            <person name="Barabote R."/>
            <person name="Lorca G."/>
            <person name="Altermann E."/>
            <person name="Barrangou R."/>
            <person name="Ganesan B."/>
            <person name="Xie Y."/>
            <person name="Rawsthorne H."/>
            <person name="Tamir D."/>
            <person name="Parker C."/>
            <person name="Breidt F."/>
            <person name="Broadbent J.R."/>
            <person name="Hutkins R."/>
            <person name="O'Sullivan D."/>
            <person name="Steele J."/>
            <person name="Unlu G."/>
            <person name="Saier M.H. Jr."/>
            <person name="Klaenhammer T."/>
            <person name="Richardson P."/>
            <person name="Kozyavkin S."/>
            <person name="Weimer B.C."/>
            <person name="Mills D.A."/>
        </authorList>
    </citation>
    <scope>NUCLEOTIDE SEQUENCE [LARGE SCALE GENOMIC DNA]</scope>
    <source>
        <strain>ATCC BAA-365 / Lb-18</strain>
    </source>
</reference>
<gene>
    <name evidence="1" type="primary">thyA</name>
    <name type="ordered locus">LBUL_0720</name>
</gene>
<organism>
    <name type="scientific">Lactobacillus delbrueckii subsp. bulgaricus (strain ATCC BAA-365 / Lb-18)</name>
    <dbReference type="NCBI Taxonomy" id="321956"/>
    <lineage>
        <taxon>Bacteria</taxon>
        <taxon>Bacillati</taxon>
        <taxon>Bacillota</taxon>
        <taxon>Bacilli</taxon>
        <taxon>Lactobacillales</taxon>
        <taxon>Lactobacillaceae</taxon>
        <taxon>Lactobacillus</taxon>
    </lineage>
</organism>
<protein>
    <recommendedName>
        <fullName evidence="1">Thymidylate synthase</fullName>
        <shortName evidence="1">TS</shortName>
        <shortName evidence="1">TSase</shortName>
        <ecNumber evidence="1">2.1.1.45</ecNumber>
    </recommendedName>
</protein>
<name>TYSY_LACDB</name>
<feature type="chain" id="PRO_1000000615" description="Thymidylate synthase">
    <location>
        <begin position="1"/>
        <end position="318"/>
    </location>
</feature>
<feature type="active site" description="Nucleophile" evidence="1">
    <location>
        <position position="200"/>
    </location>
</feature>
<feature type="binding site" description="in other chain" evidence="1">
    <location>
        <position position="25"/>
    </location>
    <ligand>
        <name>dUMP</name>
        <dbReference type="ChEBI" id="CHEBI:246422"/>
        <note>ligand shared between dimeric partners</note>
    </ligand>
</feature>
<feature type="binding site" evidence="1">
    <location>
        <begin position="180"/>
        <end position="181"/>
    </location>
    <ligand>
        <name>dUMP</name>
        <dbReference type="ChEBI" id="CHEBI:246422"/>
        <note>ligand shared between dimeric partners</note>
    </ligand>
</feature>
<feature type="binding site" description="in other chain" evidence="1">
    <location>
        <begin position="220"/>
        <end position="223"/>
    </location>
    <ligand>
        <name>dUMP</name>
        <dbReference type="ChEBI" id="CHEBI:246422"/>
        <note>ligand shared between dimeric partners</note>
    </ligand>
</feature>
<feature type="binding site" evidence="1">
    <location>
        <position position="223"/>
    </location>
    <ligand>
        <name>(6R)-5,10-methylene-5,6,7,8-tetrahydrofolate</name>
        <dbReference type="ChEBI" id="CHEBI:15636"/>
    </ligand>
</feature>
<feature type="binding site" description="in other chain" evidence="1">
    <location>
        <position position="231"/>
    </location>
    <ligand>
        <name>dUMP</name>
        <dbReference type="ChEBI" id="CHEBI:246422"/>
        <note>ligand shared between dimeric partners</note>
    </ligand>
</feature>
<feature type="binding site" description="in other chain" evidence="1">
    <location>
        <begin position="261"/>
        <end position="263"/>
    </location>
    <ligand>
        <name>dUMP</name>
        <dbReference type="ChEBI" id="CHEBI:246422"/>
        <note>ligand shared between dimeric partners</note>
    </ligand>
</feature>
<feature type="binding site" evidence="1">
    <location>
        <position position="317"/>
    </location>
    <ligand>
        <name>(6R)-5,10-methylene-5,6,7,8-tetrahydrofolate</name>
        <dbReference type="ChEBI" id="CHEBI:15636"/>
    </ligand>
</feature>
<dbReference type="EC" id="2.1.1.45" evidence="1"/>
<dbReference type="EMBL" id="CP000412">
    <property type="protein sequence ID" value="ABJ58343.1"/>
    <property type="molecule type" value="Genomic_DNA"/>
</dbReference>
<dbReference type="RefSeq" id="WP_003619256.1">
    <property type="nucleotide sequence ID" value="NC_008529.1"/>
</dbReference>
<dbReference type="SMR" id="Q04B29"/>
<dbReference type="KEGG" id="lbu:LBUL_0720"/>
<dbReference type="HOGENOM" id="CLU_021669_0_0_9"/>
<dbReference type="BioCyc" id="LDEL321956:LBUL_RS03435-MONOMER"/>
<dbReference type="UniPathway" id="UPA00575"/>
<dbReference type="GO" id="GO:0005829">
    <property type="term" value="C:cytosol"/>
    <property type="evidence" value="ECO:0007669"/>
    <property type="project" value="TreeGrafter"/>
</dbReference>
<dbReference type="GO" id="GO:0004799">
    <property type="term" value="F:thymidylate synthase activity"/>
    <property type="evidence" value="ECO:0007669"/>
    <property type="project" value="UniProtKB-UniRule"/>
</dbReference>
<dbReference type="GO" id="GO:0006231">
    <property type="term" value="P:dTMP biosynthetic process"/>
    <property type="evidence" value="ECO:0007669"/>
    <property type="project" value="UniProtKB-UniRule"/>
</dbReference>
<dbReference type="GO" id="GO:0006235">
    <property type="term" value="P:dTTP biosynthetic process"/>
    <property type="evidence" value="ECO:0007669"/>
    <property type="project" value="UniProtKB-UniRule"/>
</dbReference>
<dbReference type="GO" id="GO:0032259">
    <property type="term" value="P:methylation"/>
    <property type="evidence" value="ECO:0007669"/>
    <property type="project" value="UniProtKB-KW"/>
</dbReference>
<dbReference type="CDD" id="cd00351">
    <property type="entry name" value="TS_Pyrimidine_HMase"/>
    <property type="match status" value="1"/>
</dbReference>
<dbReference type="Gene3D" id="3.30.572.10">
    <property type="entry name" value="Thymidylate synthase/dCMP hydroxymethylase domain"/>
    <property type="match status" value="1"/>
</dbReference>
<dbReference type="HAMAP" id="MF_00008">
    <property type="entry name" value="Thymidy_synth_bact"/>
    <property type="match status" value="1"/>
</dbReference>
<dbReference type="InterPro" id="IPR045097">
    <property type="entry name" value="Thymidate_synth/dCMP_Mease"/>
</dbReference>
<dbReference type="InterPro" id="IPR023451">
    <property type="entry name" value="Thymidate_synth/dCMP_Mease_dom"/>
</dbReference>
<dbReference type="InterPro" id="IPR036926">
    <property type="entry name" value="Thymidate_synth/dCMP_Mease_sf"/>
</dbReference>
<dbReference type="InterPro" id="IPR000398">
    <property type="entry name" value="Thymidylate_synthase"/>
</dbReference>
<dbReference type="InterPro" id="IPR020940">
    <property type="entry name" value="Thymidylate_synthase_AS"/>
</dbReference>
<dbReference type="NCBIfam" id="NF002496">
    <property type="entry name" value="PRK01827.1-2"/>
    <property type="match status" value="1"/>
</dbReference>
<dbReference type="NCBIfam" id="TIGR03284">
    <property type="entry name" value="thym_sym"/>
    <property type="match status" value="1"/>
</dbReference>
<dbReference type="PANTHER" id="PTHR11548:SF9">
    <property type="entry name" value="THYMIDYLATE SYNTHASE"/>
    <property type="match status" value="1"/>
</dbReference>
<dbReference type="PANTHER" id="PTHR11548">
    <property type="entry name" value="THYMIDYLATE SYNTHASE 1"/>
    <property type="match status" value="1"/>
</dbReference>
<dbReference type="Pfam" id="PF00303">
    <property type="entry name" value="Thymidylat_synt"/>
    <property type="match status" value="1"/>
</dbReference>
<dbReference type="PRINTS" id="PR00108">
    <property type="entry name" value="THYMDSNTHASE"/>
</dbReference>
<dbReference type="SUPFAM" id="SSF55831">
    <property type="entry name" value="Thymidylate synthase/dCMP hydroxymethylase"/>
    <property type="match status" value="1"/>
</dbReference>
<dbReference type="PROSITE" id="PS00091">
    <property type="entry name" value="THYMIDYLATE_SYNTHASE"/>
    <property type="match status" value="1"/>
</dbReference>
<comment type="function">
    <text evidence="1">Catalyzes the reductive methylation of 2'-deoxyuridine-5'-monophosphate (dUMP) to 2'-deoxythymidine-5'-monophosphate (dTMP) while utilizing 5,10-methylenetetrahydrofolate (mTHF) as the methyl donor and reductant in the reaction, yielding dihydrofolate (DHF) as a by-product. This enzymatic reaction provides an intracellular de novo source of dTMP, an essential precursor for DNA biosynthesis.</text>
</comment>
<comment type="catalytic activity">
    <reaction evidence="1">
        <text>dUMP + (6R)-5,10-methylene-5,6,7,8-tetrahydrofolate = 7,8-dihydrofolate + dTMP</text>
        <dbReference type="Rhea" id="RHEA:12104"/>
        <dbReference type="ChEBI" id="CHEBI:15636"/>
        <dbReference type="ChEBI" id="CHEBI:57451"/>
        <dbReference type="ChEBI" id="CHEBI:63528"/>
        <dbReference type="ChEBI" id="CHEBI:246422"/>
        <dbReference type="EC" id="2.1.1.45"/>
    </reaction>
</comment>
<comment type="pathway">
    <text evidence="1">Pyrimidine metabolism; dTTP biosynthesis.</text>
</comment>
<comment type="subunit">
    <text evidence="1">Homodimer.</text>
</comment>
<comment type="subcellular location">
    <subcellularLocation>
        <location evidence="1">Cytoplasm</location>
    </subcellularLocation>
</comment>
<comment type="similarity">
    <text evidence="1">Belongs to the thymidylate synthase family. Bacterial-type ThyA subfamily.</text>
</comment>
<evidence type="ECO:0000255" key="1">
    <source>
        <dbReference type="HAMAP-Rule" id="MF_00008"/>
    </source>
</evidence>
<keyword id="KW-0963">Cytoplasm</keyword>
<keyword id="KW-0489">Methyltransferase</keyword>
<keyword id="KW-0545">Nucleotide biosynthesis</keyword>
<keyword id="KW-0808">Transferase</keyword>
<sequence length="318" mass="36371">MANQDQAYLDLLKKIMTEGNDKNDRTGTGTRSLFGAQMRFDLSQGFPILTTKRVPFGLIKSELLWFLRGDTNIRFLLEHKNHIWDEWAFKNWVTSPEYQGPDMTDFGLRSQKDPGFKAVYDEEMQKFCQRILDDEAFAQKYGNLGDVYGAQWRHWGKRDGGFIDQIADVIEQIKTNPDSRRLIVTAWNPEDVPSSALPPCHVLFQFYVADGKLSLQLYQRSGDMFLGVPFNIASYSLLLSLIARETGLEVGEFVHTIGDAHIYKNHFAQVEEQLKRKPFDAPTLWLNPGKKKVADFEMADIKLVNYQHGSTIKAPVAV</sequence>
<proteinExistence type="inferred from homology"/>